<proteinExistence type="inferred from homology"/>
<organismHost>
    <name type="scientific">Antirrhinum majus</name>
    <name type="common">Garden snapdragon</name>
    <dbReference type="NCBI Taxonomy" id="4151"/>
</organismHost>
<organismHost>
    <name type="scientific">Capsicum</name>
    <name type="common">peppers</name>
    <dbReference type="NCBI Taxonomy" id="4071"/>
</organismHost>
<organismHost>
    <name type="scientific">Delphinium</name>
    <dbReference type="NCBI Taxonomy" id="46246"/>
</organismHost>
<organismHost>
    <name type="scientific">Petunia</name>
    <dbReference type="NCBI Taxonomy" id="4101"/>
</organismHost>
<organismHost>
    <name type="scientific">Solanum lycopersicum</name>
    <name type="common">Tomato</name>
    <name type="synonym">Lycopersicon esculentum</name>
    <dbReference type="NCBI Taxonomy" id="4081"/>
</organismHost>
<organismHost>
    <name type="scientific">Tagetes</name>
    <name type="common">marigolds</name>
    <dbReference type="NCBI Taxonomy" id="13707"/>
</organismHost>
<evidence type="ECO:0000250" key="1">
    <source>
        <dbReference type="UniProtKB" id="A0A0S4IJL0"/>
    </source>
</evidence>
<evidence type="ECO:0000250" key="2">
    <source>
        <dbReference type="UniProtKB" id="P03583"/>
    </source>
</evidence>
<evidence type="ECO:0000250" key="3">
    <source>
        <dbReference type="UniProtKB" id="P69513"/>
    </source>
</evidence>
<evidence type="ECO:0000256" key="4">
    <source>
        <dbReference type="SAM" id="MobiDB-lite"/>
    </source>
</evidence>
<evidence type="ECO:0000305" key="5"/>
<gene>
    <name type="primary">MP</name>
</gene>
<reference key="1">
    <citation type="journal article" date="2000" name="Mol. Biol. (Mosk.)">
        <title>Biological properties and genome structure of the Kazakh isolate K1 of Tobacco Mosaic virus.</title>
        <authorList>
            <person name="Belenovich E.V."/>
            <person name="Novikov V.K."/>
            <person name="Zavriev S.K."/>
        </authorList>
    </citation>
    <scope>NUCLEOTIDE SEQUENCE [GENOMIC RNA]</scope>
</reference>
<organism>
    <name type="scientific">Tomato mosaic virus (strain Kazakh K1)</name>
    <name type="common">ToMV</name>
    <name type="synonym">TMV strain K1</name>
    <dbReference type="NCBI Taxonomy" id="138311"/>
    <lineage>
        <taxon>Viruses</taxon>
        <taxon>Riboviria</taxon>
        <taxon>Orthornavirae</taxon>
        <taxon>Kitrinoviricota</taxon>
        <taxon>Alsuviricetes</taxon>
        <taxon>Martellivirales</taxon>
        <taxon>Virgaviridae</taxon>
        <taxon>Tobamovirus</taxon>
        <taxon>Tomato mosaic virus</taxon>
    </lineage>
</organism>
<dbReference type="EMBL" id="AJ243571">
    <property type="protein sequence ID" value="CAB62913.1"/>
    <property type="molecule type" value="Genomic_RNA"/>
</dbReference>
<dbReference type="EMBL" id="AF062519">
    <property type="protein sequence ID" value="AAD19281.1"/>
    <property type="molecule type" value="Genomic_RNA"/>
</dbReference>
<dbReference type="Proteomes" id="UP000008252">
    <property type="component" value="Genome"/>
</dbReference>
<dbReference type="GO" id="GO:0030430">
    <property type="term" value="C:host cell cytoplasm"/>
    <property type="evidence" value="ECO:0007669"/>
    <property type="project" value="UniProtKB-KW"/>
</dbReference>
<dbReference type="GO" id="GO:0044219">
    <property type="term" value="C:host cell plasmodesma"/>
    <property type="evidence" value="ECO:0007669"/>
    <property type="project" value="UniProtKB-SubCell"/>
</dbReference>
<dbReference type="GO" id="GO:0044163">
    <property type="term" value="C:host cytoskeleton"/>
    <property type="evidence" value="ECO:0007669"/>
    <property type="project" value="UniProtKB-SubCell"/>
</dbReference>
<dbReference type="GO" id="GO:0003723">
    <property type="term" value="F:RNA binding"/>
    <property type="evidence" value="ECO:0007669"/>
    <property type="project" value="UniProtKB-KW"/>
</dbReference>
<dbReference type="GO" id="GO:0046740">
    <property type="term" value="P:transport of virus in host, cell to cell"/>
    <property type="evidence" value="ECO:0007669"/>
    <property type="project" value="UniProtKB-KW"/>
</dbReference>
<dbReference type="InterPro" id="IPR001022">
    <property type="entry name" value="TMV_movement"/>
</dbReference>
<dbReference type="InterPro" id="IPR028919">
    <property type="entry name" value="Viral_movement"/>
</dbReference>
<dbReference type="Pfam" id="PF01107">
    <property type="entry name" value="MP"/>
    <property type="match status" value="1"/>
</dbReference>
<dbReference type="PRINTS" id="PR00964">
    <property type="entry name" value="MOVEMENT"/>
</dbReference>
<name>MVP_TOMK1</name>
<protein>
    <recommendedName>
        <fullName>Movement protein</fullName>
    </recommendedName>
    <alternativeName>
        <fullName>30 kDa protein</fullName>
    </alternativeName>
    <alternativeName>
        <fullName>Cell-to-cell transport protein</fullName>
    </alternativeName>
</protein>
<keyword id="KW-1031">Host cell junction</keyword>
<keyword id="KW-1035">Host cytoplasm</keyword>
<keyword id="KW-1037">Host cytoskeleton</keyword>
<keyword id="KW-0694">RNA-binding</keyword>
<keyword id="KW-0813">Transport</keyword>
<keyword id="KW-0916">Viral movement protein</keyword>
<sequence>MALVVKGKVNINEFIDLSKSEKLLPSMFTPVKSVMVSKVDKIMVHENESLSEVNLLKGVKLIEGGYVCLVGLVVSGEWNLPDNCRGGVSVCMVDKRMERADEATLGSYYTAAAKKRFQFKVVPNYGITTKDAEKNIWQVLVNIKNVKMSAGYCPLSLEFVSVCIVYKNNIKLGLREKVTSVNDGGPMELSEEVVDEFMENVPMSVRLAKFRTKSSKRGPKNNNNLGKGRSGGRPKPKSFDEVEKEFDNLIEDEAETSVADSDSY</sequence>
<comment type="function">
    <text evidence="2 3">Transports viral genome to neighboring plant cells directly through plasmosdesmata, without any budding. The movement protein allows efficient cell to cell propagation, by bypassing the host cell wall barrier. Forms a ribonucleoprotein complex with viral RNA. Binds microtubules and modulates microtubule stability. Can bind double-stranded DNA. Triggers host hypersensitive defense reaction in incompatible plants harboring resistance (R) proteins.</text>
</comment>
<comment type="subunit">
    <text evidence="1 2 3">Binds to host RBCS at the plasmodesmata; this interaction seems required for viral systemic movement (By similarity). In resistant plants, interacts with host MBP2C at host microtubules; this interaction prevents virus cell to cell movement. In resistant plants, interacts with host resistance (R) protein (e.g. tomato ToMV resistance protein TM-2(2), AC Q71BG9) at the host plasma membrane; this interaction triggers host defense responses leading to programmed cell death (By similarity).</text>
</comment>
<comment type="subcellular location">
    <subcellularLocation>
        <location evidence="3">Host cytoplasm</location>
        <location evidence="3">Host cytoskeleton</location>
    </subcellularLocation>
    <subcellularLocation>
        <location evidence="3">Host cell junction</location>
        <location evidence="3">Host plasmodesma</location>
    </subcellularLocation>
    <text evidence="2 3">Binds to the host cytoskeleton before being transported to the host plasmodesmata. Observed in virus replication complexes (VRCs) of tobamovirus infected host cells (By similarity). In resistant plants, targeted to the host plasma membrane via the interaction with host resistance (R) protein TM-2 (e.g. tomato ToMV resistance protein TM-2(2), AC Q71BG9) (By similarity).</text>
</comment>
<comment type="similarity">
    <text evidence="5">Belongs to the tobamovirus movement protein family.</text>
</comment>
<accession>P69511</accession>
<accession>P03584</accession>
<feature type="chain" id="PRO_0000144968" description="Movement protein">
    <location>
        <begin position="1"/>
        <end position="264"/>
    </location>
</feature>
<feature type="region of interest" description="Disordered" evidence="4">
    <location>
        <begin position="211"/>
        <end position="264"/>
    </location>
</feature>
<feature type="compositionally biased region" description="Basic and acidic residues" evidence="4">
    <location>
        <begin position="237"/>
        <end position="247"/>
    </location>
</feature>